<dbReference type="EMBL" id="AC004928">
    <property type="status" value="NOT_ANNOTATED_CDS"/>
    <property type="molecule type" value="Genomic_DNA"/>
</dbReference>
<dbReference type="EMBL" id="AC005692">
    <property type="status" value="NOT_ANNOTATED_CDS"/>
    <property type="molecule type" value="Genomic_DNA"/>
</dbReference>
<dbReference type="EMBL" id="AC006362">
    <property type="status" value="NOT_ANNOTATED_CDS"/>
    <property type="molecule type" value="Genomic_DNA"/>
</dbReference>
<dbReference type="EMBL" id="AC006396">
    <property type="status" value="NOT_ANNOTATED_CDS"/>
    <property type="molecule type" value="Genomic_DNA"/>
</dbReference>
<dbReference type="EMBL" id="AC073878">
    <property type="status" value="NOT_ANNOTATED_CDS"/>
    <property type="molecule type" value="Genomic_DNA"/>
</dbReference>
<dbReference type="EMBL" id="BX114205">
    <property type="status" value="NOT_ANNOTATED_CDS"/>
    <property type="molecule type" value="mRNA"/>
</dbReference>
<dbReference type="CCDS" id="CCDS59086.1"/>
<dbReference type="RefSeq" id="NP_001182207.1">
    <property type="nucleotide sequence ID" value="NM_001195278.2"/>
</dbReference>
<dbReference type="BioGRID" id="934125">
    <property type="interactions" value="3"/>
</dbReference>
<dbReference type="FunCoup" id="H3BS89">
    <property type="interactions" value="282"/>
</dbReference>
<dbReference type="IntAct" id="H3BS89">
    <property type="interactions" value="2"/>
</dbReference>
<dbReference type="STRING" id="9606.ENSP00000456594"/>
<dbReference type="GlyCosmos" id="H3BS89">
    <property type="glycosylation" value="2 sites, No reported glycans"/>
</dbReference>
<dbReference type="GlyGen" id="H3BS89">
    <property type="glycosylation" value="3 sites, 2 N-linked glycans (2 sites)"/>
</dbReference>
<dbReference type="iPTMnet" id="H3BS89"/>
<dbReference type="PhosphoSitePlus" id="H3BS89"/>
<dbReference type="SwissPalm" id="H3BS89"/>
<dbReference type="BioMuta" id="TMEM178B"/>
<dbReference type="jPOST" id="H3BS89"/>
<dbReference type="MassIVE" id="H3BS89"/>
<dbReference type="PaxDb" id="9606-ENSP00000456594"/>
<dbReference type="PeptideAtlas" id="H3BS89"/>
<dbReference type="Antibodypedia" id="63825">
    <property type="antibodies" value="4 antibodies from 4 providers"/>
</dbReference>
<dbReference type="DNASU" id="100507421"/>
<dbReference type="Ensembl" id="ENST00000565468.6">
    <property type="protein sequence ID" value="ENSP00000456594.1"/>
    <property type="gene ID" value="ENSG00000261115.7"/>
</dbReference>
<dbReference type="GeneID" id="100507421"/>
<dbReference type="KEGG" id="hsa:100507421"/>
<dbReference type="MANE-Select" id="ENST00000565468.6">
    <property type="protein sequence ID" value="ENSP00000456594.1"/>
    <property type="RefSeq nucleotide sequence ID" value="NM_001195278.2"/>
    <property type="RefSeq protein sequence ID" value="NP_001182207.1"/>
</dbReference>
<dbReference type="UCSC" id="uc003vwg.3">
    <property type="organism name" value="human"/>
</dbReference>
<dbReference type="AGR" id="HGNC:44112"/>
<dbReference type="CTD" id="100507421"/>
<dbReference type="DisGeNET" id="100507421"/>
<dbReference type="GeneCards" id="TMEM178B"/>
<dbReference type="HGNC" id="HGNC:44112">
    <property type="gene designation" value="TMEM178B"/>
</dbReference>
<dbReference type="HPA" id="ENSG00000261115">
    <property type="expression patterns" value="Tissue enhanced (brain, heart muscle, parathyroid gland, tongue)"/>
</dbReference>
<dbReference type="neXtProt" id="NX_H3BS89"/>
<dbReference type="OpenTargets" id="ENSG00000261115"/>
<dbReference type="VEuPathDB" id="HostDB:ENSG00000261115"/>
<dbReference type="eggNOG" id="ENOG502QSX0">
    <property type="taxonomic scope" value="Eukaryota"/>
</dbReference>
<dbReference type="GeneTree" id="ENSGT00390000015299"/>
<dbReference type="HOGENOM" id="CLU_961492_0_0_1"/>
<dbReference type="InParanoid" id="H3BS89"/>
<dbReference type="OMA" id="RQHNSTN"/>
<dbReference type="OrthoDB" id="8809386at2759"/>
<dbReference type="PAN-GO" id="H3BS89">
    <property type="GO annotations" value="1 GO annotation based on evolutionary models"/>
</dbReference>
<dbReference type="PhylomeDB" id="H3BS89"/>
<dbReference type="PathwayCommons" id="H3BS89"/>
<dbReference type="SignaLink" id="H3BS89"/>
<dbReference type="BioGRID-ORCS" id="100507421">
    <property type="hits" value="16 hits in 1141 CRISPR screens"/>
</dbReference>
<dbReference type="ChiTaRS" id="TMEM178B">
    <property type="organism name" value="human"/>
</dbReference>
<dbReference type="Pharos" id="H3BS89">
    <property type="development level" value="Tdark"/>
</dbReference>
<dbReference type="PRO" id="PR:H3BS89"/>
<dbReference type="Proteomes" id="UP000005640">
    <property type="component" value="Chromosome 7"/>
</dbReference>
<dbReference type="RNAct" id="H3BS89">
    <property type="molecule type" value="protein"/>
</dbReference>
<dbReference type="Bgee" id="ENSG00000261115">
    <property type="expression patterns" value="Expressed in cardiac muscle of right atrium and 151 other cell types or tissues"/>
</dbReference>
<dbReference type="ExpressionAtlas" id="H3BS89">
    <property type="expression patterns" value="baseline and differential"/>
</dbReference>
<dbReference type="GO" id="GO:0016020">
    <property type="term" value="C:membrane"/>
    <property type="evidence" value="ECO:0000318"/>
    <property type="project" value="GO_Central"/>
</dbReference>
<dbReference type="Gene3D" id="1.20.140.150">
    <property type="match status" value="1"/>
</dbReference>
<dbReference type="InterPro" id="IPR004031">
    <property type="entry name" value="PMP22/EMP/MP20/Claudin"/>
</dbReference>
<dbReference type="InterPro" id="IPR039625">
    <property type="entry name" value="T178A/B"/>
</dbReference>
<dbReference type="PANTHER" id="PTHR32005:SF1">
    <property type="entry name" value="TRANSMEMBRANE PROTEIN 178B"/>
    <property type="match status" value="1"/>
</dbReference>
<dbReference type="PANTHER" id="PTHR32005">
    <property type="entry name" value="TRANSMEMBRANE PROTEIN 178B-RELATED"/>
    <property type="match status" value="1"/>
</dbReference>
<dbReference type="Pfam" id="PF13903">
    <property type="entry name" value="Claudin_2"/>
    <property type="match status" value="1"/>
</dbReference>
<feature type="signal peptide" evidence="1">
    <location>
        <begin position="1"/>
        <end position="23"/>
    </location>
</feature>
<feature type="chain" id="PRO_0000419261" description="Transmembrane protein 178B">
    <location>
        <begin position="24"/>
        <end position="294"/>
    </location>
</feature>
<feature type="transmembrane region" description="Helical" evidence="1">
    <location>
        <begin position="172"/>
        <end position="192"/>
    </location>
</feature>
<feature type="transmembrane region" description="Helical" evidence="1">
    <location>
        <begin position="206"/>
        <end position="226"/>
    </location>
</feature>
<feature type="transmembrane region" description="Helical" evidence="1">
    <location>
        <begin position="252"/>
        <end position="272"/>
    </location>
</feature>
<feature type="glycosylation site" description="N-linked (GlcNAc...) asparagine" evidence="1">
    <location>
        <position position="148"/>
    </location>
</feature>
<feature type="glycosylation site" description="N-linked (GlcNAc...) asparagine" evidence="1">
    <location>
        <position position="152"/>
    </location>
</feature>
<sequence>MAAGRLLLYTGLSLALCALGMLAVAICSDHWYETDARKHRDRCKAFNTRRVDPGFIYNNNNNLPLRASRSRLDRWEGKLLRARNRRQLFAMSPADECSRQYNSTNMGLWRKCHRQGFDPEIAALIRKGEIERCTYIKYHYSSATIPRNLTFNITKTIRQDEWHALHLRRMTAGFMGMAVAIILFGWIIGVLGCCWDRGLMQYVAGLLFLMGGTFCIISLCTCVAGINFELSRYPRYLYGLPDDISHGYGWSMFCAWGGLGLTLISGFFCTLAPSVQPVPRTNYPKSRPENGTVC</sequence>
<organism>
    <name type="scientific">Homo sapiens</name>
    <name type="common">Human</name>
    <dbReference type="NCBI Taxonomy" id="9606"/>
    <lineage>
        <taxon>Eukaryota</taxon>
        <taxon>Metazoa</taxon>
        <taxon>Chordata</taxon>
        <taxon>Craniata</taxon>
        <taxon>Vertebrata</taxon>
        <taxon>Euteleostomi</taxon>
        <taxon>Mammalia</taxon>
        <taxon>Eutheria</taxon>
        <taxon>Euarchontoglires</taxon>
        <taxon>Primates</taxon>
        <taxon>Haplorrhini</taxon>
        <taxon>Catarrhini</taxon>
        <taxon>Hominidae</taxon>
        <taxon>Homo</taxon>
    </lineage>
</organism>
<comment type="subcellular location">
    <subcellularLocation>
        <location evidence="2">Membrane</location>
        <topology evidence="2">Multi-pass membrane protein</topology>
    </subcellularLocation>
</comment>
<comment type="similarity">
    <text evidence="2">Belongs to the TMEM178 family.</text>
</comment>
<protein>
    <recommendedName>
        <fullName>Transmembrane protein 178B</fullName>
    </recommendedName>
</protein>
<proteinExistence type="evidence at protein level"/>
<gene>
    <name type="primary">TMEM178B</name>
</gene>
<keyword id="KW-0325">Glycoprotein</keyword>
<keyword id="KW-0472">Membrane</keyword>
<keyword id="KW-1267">Proteomics identification</keyword>
<keyword id="KW-1185">Reference proteome</keyword>
<keyword id="KW-0732">Signal</keyword>
<keyword id="KW-0812">Transmembrane</keyword>
<keyword id="KW-1133">Transmembrane helix</keyword>
<evidence type="ECO:0000255" key="1"/>
<evidence type="ECO:0000305" key="2"/>
<reference key="1">
    <citation type="journal article" date="2003" name="Nature">
        <title>The DNA sequence of human chromosome 7.</title>
        <authorList>
            <person name="Hillier L.W."/>
            <person name="Fulton R.S."/>
            <person name="Fulton L.A."/>
            <person name="Graves T.A."/>
            <person name="Pepin K.H."/>
            <person name="Wagner-McPherson C."/>
            <person name="Layman D."/>
            <person name="Maas J."/>
            <person name="Jaeger S."/>
            <person name="Walker R."/>
            <person name="Wylie K."/>
            <person name="Sekhon M."/>
            <person name="Becker M.C."/>
            <person name="O'Laughlin M.D."/>
            <person name="Schaller M.E."/>
            <person name="Fewell G.A."/>
            <person name="Delehaunty K.D."/>
            <person name="Miner T.L."/>
            <person name="Nash W.E."/>
            <person name="Cordes M."/>
            <person name="Du H."/>
            <person name="Sun H."/>
            <person name="Edwards J."/>
            <person name="Bradshaw-Cordum H."/>
            <person name="Ali J."/>
            <person name="Andrews S."/>
            <person name="Isak A."/>
            <person name="Vanbrunt A."/>
            <person name="Nguyen C."/>
            <person name="Du F."/>
            <person name="Lamar B."/>
            <person name="Courtney L."/>
            <person name="Kalicki J."/>
            <person name="Ozersky P."/>
            <person name="Bielicki L."/>
            <person name="Scott K."/>
            <person name="Holmes A."/>
            <person name="Harkins R."/>
            <person name="Harris A."/>
            <person name="Strong C.M."/>
            <person name="Hou S."/>
            <person name="Tomlinson C."/>
            <person name="Dauphin-Kohlberg S."/>
            <person name="Kozlowicz-Reilly A."/>
            <person name="Leonard S."/>
            <person name="Rohlfing T."/>
            <person name="Rock S.M."/>
            <person name="Tin-Wollam A.-M."/>
            <person name="Abbott A."/>
            <person name="Minx P."/>
            <person name="Maupin R."/>
            <person name="Strowmatt C."/>
            <person name="Latreille P."/>
            <person name="Miller N."/>
            <person name="Johnson D."/>
            <person name="Murray J."/>
            <person name="Woessner J.P."/>
            <person name="Wendl M.C."/>
            <person name="Yang S.-P."/>
            <person name="Schultz B.R."/>
            <person name="Wallis J.W."/>
            <person name="Spieth J."/>
            <person name="Bieri T.A."/>
            <person name="Nelson J.O."/>
            <person name="Berkowicz N."/>
            <person name="Wohldmann P.E."/>
            <person name="Cook L.L."/>
            <person name="Hickenbotham M.T."/>
            <person name="Eldred J."/>
            <person name="Williams D."/>
            <person name="Bedell J.A."/>
            <person name="Mardis E.R."/>
            <person name="Clifton S.W."/>
            <person name="Chissoe S.L."/>
            <person name="Marra M.A."/>
            <person name="Raymond C."/>
            <person name="Haugen E."/>
            <person name="Gillett W."/>
            <person name="Zhou Y."/>
            <person name="James R."/>
            <person name="Phelps K."/>
            <person name="Iadanoto S."/>
            <person name="Bubb K."/>
            <person name="Simms E."/>
            <person name="Levy R."/>
            <person name="Clendenning J."/>
            <person name="Kaul R."/>
            <person name="Kent W.J."/>
            <person name="Furey T.S."/>
            <person name="Baertsch R.A."/>
            <person name="Brent M.R."/>
            <person name="Keibler E."/>
            <person name="Flicek P."/>
            <person name="Bork P."/>
            <person name="Suyama M."/>
            <person name="Bailey J.A."/>
            <person name="Portnoy M.E."/>
            <person name="Torrents D."/>
            <person name="Chinwalla A.T."/>
            <person name="Gish W.R."/>
            <person name="Eddy S.R."/>
            <person name="McPherson J.D."/>
            <person name="Olson M.V."/>
            <person name="Eichler E.E."/>
            <person name="Green E.D."/>
            <person name="Waterston R.H."/>
            <person name="Wilson R.K."/>
        </authorList>
    </citation>
    <scope>NUCLEOTIDE SEQUENCE [LARGE SCALE GENOMIC DNA]</scope>
</reference>
<reference key="2">
    <citation type="submission" date="2002-12" db="EMBL/GenBank/DDBJ databases">
        <authorList>
            <person name="Ebert L."/>
            <person name="Heil O."/>
            <person name="Hennig S."/>
            <person name="Neubert P."/>
            <person name="Partsch E."/>
            <person name="Peters M."/>
            <person name="Radelof U."/>
            <person name="Schneider D."/>
            <person name="Korn B."/>
        </authorList>
    </citation>
    <scope>NUCLEOTIDE SEQUENCE [LARGE SCALE MRNA] OF 1-142</scope>
    <source>
        <tissue>Brain</tissue>
    </source>
</reference>
<name>T178B_HUMAN</name>
<accession>H3BS89</accession>